<proteinExistence type="inferred from homology"/>
<comment type="function">
    <text evidence="1">Synthesizes alpha-1,4-glucan chains using ADP-glucose.</text>
</comment>
<comment type="catalytic activity">
    <reaction evidence="1">
        <text>[(1-&gt;4)-alpha-D-glucosyl](n) + ADP-alpha-D-glucose = [(1-&gt;4)-alpha-D-glucosyl](n+1) + ADP + H(+)</text>
        <dbReference type="Rhea" id="RHEA:18189"/>
        <dbReference type="Rhea" id="RHEA-COMP:9584"/>
        <dbReference type="Rhea" id="RHEA-COMP:9587"/>
        <dbReference type="ChEBI" id="CHEBI:15378"/>
        <dbReference type="ChEBI" id="CHEBI:15444"/>
        <dbReference type="ChEBI" id="CHEBI:57498"/>
        <dbReference type="ChEBI" id="CHEBI:456216"/>
        <dbReference type="EC" id="2.4.1.21"/>
    </reaction>
</comment>
<comment type="pathway">
    <text evidence="1">Glycan biosynthesis; glycogen biosynthesis.</text>
</comment>
<comment type="similarity">
    <text evidence="1">Belongs to the glycosyltransferase 1 family. Bacterial/plant glycogen synthase subfamily.</text>
</comment>
<dbReference type="EC" id="2.4.1.21" evidence="1"/>
<dbReference type="EMBL" id="CP001147">
    <property type="protein sequence ID" value="ACI21910.1"/>
    <property type="molecule type" value="Genomic_DNA"/>
</dbReference>
<dbReference type="RefSeq" id="WP_012546609.1">
    <property type="nucleotide sequence ID" value="NC_011296.1"/>
</dbReference>
<dbReference type="RefSeq" id="YP_002249289.1">
    <property type="nucleotide sequence ID" value="NC_011296.1"/>
</dbReference>
<dbReference type="SMR" id="B5YG91"/>
<dbReference type="FunCoup" id="B5YG91">
    <property type="interactions" value="260"/>
</dbReference>
<dbReference type="STRING" id="289376.THEYE_A1492"/>
<dbReference type="CAZy" id="GT5">
    <property type="family name" value="Glycosyltransferase Family 5"/>
</dbReference>
<dbReference type="EnsemblBacteria" id="ACI21910">
    <property type="protein sequence ID" value="ACI21910"/>
    <property type="gene ID" value="THEYE_A1492"/>
</dbReference>
<dbReference type="KEGG" id="tye:THEYE_A1492"/>
<dbReference type="PATRIC" id="fig|289376.4.peg.1451"/>
<dbReference type="eggNOG" id="COG0297">
    <property type="taxonomic scope" value="Bacteria"/>
</dbReference>
<dbReference type="HOGENOM" id="CLU_009583_18_2_0"/>
<dbReference type="InParanoid" id="B5YG91"/>
<dbReference type="OrthoDB" id="9808590at2"/>
<dbReference type="UniPathway" id="UPA00164"/>
<dbReference type="Proteomes" id="UP000000718">
    <property type="component" value="Chromosome"/>
</dbReference>
<dbReference type="GO" id="GO:0009011">
    <property type="term" value="F:alpha-1,4-glucan glucosyltransferase (ADP-glucose donor) activity"/>
    <property type="evidence" value="ECO:0007669"/>
    <property type="project" value="UniProtKB-UniRule"/>
</dbReference>
<dbReference type="GO" id="GO:0004373">
    <property type="term" value="F:alpha-1,4-glucan glucosyltransferase (UDP-glucose donor) activity"/>
    <property type="evidence" value="ECO:0007669"/>
    <property type="project" value="InterPro"/>
</dbReference>
<dbReference type="GO" id="GO:0005978">
    <property type="term" value="P:glycogen biosynthetic process"/>
    <property type="evidence" value="ECO:0007669"/>
    <property type="project" value="UniProtKB-UniRule"/>
</dbReference>
<dbReference type="CDD" id="cd03791">
    <property type="entry name" value="GT5_Glycogen_synthase_DULL1-like"/>
    <property type="match status" value="1"/>
</dbReference>
<dbReference type="Gene3D" id="3.40.50.2000">
    <property type="entry name" value="Glycogen Phosphorylase B"/>
    <property type="match status" value="2"/>
</dbReference>
<dbReference type="HAMAP" id="MF_00484">
    <property type="entry name" value="Glycogen_synth"/>
    <property type="match status" value="1"/>
</dbReference>
<dbReference type="InterPro" id="IPR001296">
    <property type="entry name" value="Glyco_trans_1"/>
</dbReference>
<dbReference type="InterPro" id="IPR011835">
    <property type="entry name" value="GS/SS"/>
</dbReference>
<dbReference type="InterPro" id="IPR013534">
    <property type="entry name" value="Starch_synth_cat_dom"/>
</dbReference>
<dbReference type="NCBIfam" id="TIGR02095">
    <property type="entry name" value="glgA"/>
    <property type="match status" value="1"/>
</dbReference>
<dbReference type="NCBIfam" id="NF001899">
    <property type="entry name" value="PRK00654.1-2"/>
    <property type="match status" value="1"/>
</dbReference>
<dbReference type="PANTHER" id="PTHR45825:SF11">
    <property type="entry name" value="ALPHA AMYLASE DOMAIN-CONTAINING PROTEIN"/>
    <property type="match status" value="1"/>
</dbReference>
<dbReference type="PANTHER" id="PTHR45825">
    <property type="entry name" value="GRANULE-BOUND STARCH SYNTHASE 1, CHLOROPLASTIC/AMYLOPLASTIC"/>
    <property type="match status" value="1"/>
</dbReference>
<dbReference type="Pfam" id="PF08323">
    <property type="entry name" value="Glyco_transf_5"/>
    <property type="match status" value="1"/>
</dbReference>
<dbReference type="Pfam" id="PF00534">
    <property type="entry name" value="Glycos_transf_1"/>
    <property type="match status" value="1"/>
</dbReference>
<dbReference type="SUPFAM" id="SSF53756">
    <property type="entry name" value="UDP-Glycosyltransferase/glycogen phosphorylase"/>
    <property type="match status" value="1"/>
</dbReference>
<protein>
    <recommendedName>
        <fullName evidence="1">Glycogen synthase</fullName>
        <ecNumber evidence="1">2.4.1.21</ecNumber>
    </recommendedName>
    <alternativeName>
        <fullName evidence="1">Starch [bacterial glycogen] synthase</fullName>
    </alternativeName>
</protein>
<organism>
    <name type="scientific">Thermodesulfovibrio yellowstonii (strain ATCC 51303 / DSM 11347 / YP87)</name>
    <dbReference type="NCBI Taxonomy" id="289376"/>
    <lineage>
        <taxon>Bacteria</taxon>
        <taxon>Pseudomonadati</taxon>
        <taxon>Nitrospirota</taxon>
        <taxon>Thermodesulfovibrionia</taxon>
        <taxon>Thermodesulfovibrionales</taxon>
        <taxon>Thermodesulfovibrionaceae</taxon>
        <taxon>Thermodesulfovibrio</taxon>
    </lineage>
</organism>
<feature type="chain" id="PRO_1000126110" description="Glycogen synthase">
    <location>
        <begin position="1"/>
        <end position="497"/>
    </location>
</feature>
<feature type="binding site" evidence="1">
    <location>
        <position position="15"/>
    </location>
    <ligand>
        <name>ADP-alpha-D-glucose</name>
        <dbReference type="ChEBI" id="CHEBI:57498"/>
    </ligand>
</feature>
<keyword id="KW-0320">Glycogen biosynthesis</keyword>
<keyword id="KW-0328">Glycosyltransferase</keyword>
<keyword id="KW-1185">Reference proteome</keyword>
<keyword id="KW-0808">Transferase</keyword>
<gene>
    <name evidence="1" type="primary">glgA</name>
    <name type="ordered locus">THEYE_A1492</name>
</gene>
<accession>B5YG91</accession>
<name>GLGA_THEYD</name>
<evidence type="ECO:0000255" key="1">
    <source>
        <dbReference type="HAMAP-Rule" id="MF_00484"/>
    </source>
</evidence>
<sequence>MKLALVSAEAYPFSKTGGLGDVVGSLFKEFIKAGIDVTLFLPFYKITRDNFSNSVVNAEIVYGAPIGLNTLFGAVRVAKVSVDSDDNLIIEPSKKGNLFFIEHNNFFDRNELYGTNHGEYLDNAERFVFFSRAVLEICKIMNLNFDVIHCHDWHTALIPLYLKTLYRECSCFEKTKTVLTVHNLGYQGIFPREKLELTGFGQEMFHIDGLEFYGMVNFLKGGLFNADIITTVSPTYAKEILTPDYGAGLDGVLRKRKENLVGIINGIDYKIWNPEEDPFIAKKYGLQNINDKQKNKEDLIALAGINSSLQDPIIAFIGRMVYQKGIDIVVDAMPNLIKNGISFIFEGTGESYYEHKIRELQNSYPSKVFAFIGFDEALAHKIYAGADSLLVPSRYEPCGLSQLIAMRYGTIPICRKTGGLSDTVEDKVTGFLFSEYSSSALTHAISRFIEIYNNKQKFLEMIREAMKRDFSWSNSSKKYIELYRGLIGERERKTGTI</sequence>
<reference key="1">
    <citation type="submission" date="2008-08" db="EMBL/GenBank/DDBJ databases">
        <title>The complete genome sequence of Thermodesulfovibrio yellowstonii strain ATCC 51303 / DSM 11347 / YP87.</title>
        <authorList>
            <person name="Dodson R.J."/>
            <person name="Durkin A.S."/>
            <person name="Wu M."/>
            <person name="Eisen J."/>
            <person name="Sutton G."/>
        </authorList>
    </citation>
    <scope>NUCLEOTIDE SEQUENCE [LARGE SCALE GENOMIC DNA]</scope>
    <source>
        <strain>ATCC 51303 / DSM 11347 / YP87</strain>
    </source>
</reference>